<feature type="chain" id="PRO_1000147488" description="Putative pre-16S rRNA nuclease">
    <location>
        <begin position="1"/>
        <end position="178"/>
    </location>
</feature>
<feature type="region of interest" description="Disordered" evidence="2">
    <location>
        <begin position="1"/>
        <end position="23"/>
    </location>
</feature>
<feature type="region of interest" description="Disordered" evidence="2">
    <location>
        <begin position="36"/>
        <end position="60"/>
    </location>
</feature>
<feature type="compositionally biased region" description="Basic and acidic residues" evidence="2">
    <location>
        <begin position="1"/>
        <end position="18"/>
    </location>
</feature>
<feature type="compositionally biased region" description="Basic and acidic residues" evidence="2">
    <location>
        <begin position="50"/>
        <end position="60"/>
    </location>
</feature>
<gene>
    <name type="ordered locus">ROP_69170</name>
</gene>
<reference key="1">
    <citation type="submission" date="2009-03" db="EMBL/GenBank/DDBJ databases">
        <title>Comparison of the complete genome sequences of Rhodococcus erythropolis PR4 and Rhodococcus opacus B4.</title>
        <authorList>
            <person name="Takarada H."/>
            <person name="Sekine M."/>
            <person name="Hosoyama A."/>
            <person name="Yamada R."/>
            <person name="Fujisawa T."/>
            <person name="Omata S."/>
            <person name="Shimizu A."/>
            <person name="Tsukatani N."/>
            <person name="Tanikawa S."/>
            <person name="Fujita N."/>
            <person name="Harayama S."/>
        </authorList>
    </citation>
    <scope>NUCLEOTIDE SEQUENCE [LARGE SCALE GENOMIC DNA]</scope>
    <source>
        <strain>B4</strain>
    </source>
</reference>
<proteinExistence type="inferred from homology"/>
<sequence>MDHAEQGPDRPGVDDPGRGRRIGIDVGSVRIGVASSDPDGILATPVETVPRSKDRGPDAPDIRRIADIVEEYEAVEVIVGLPQTLRGERGKAASIATVFAKRLRRKVDPIPVRMADERLTTVTAARALRESGVSARGQRPVIDQAAAVAILQGWLDERSRSVNAGDVGGDVQLPEAGQ</sequence>
<dbReference type="EC" id="3.1.-.-" evidence="1"/>
<dbReference type="EMBL" id="AP011115">
    <property type="protein sequence ID" value="BAH55164.1"/>
    <property type="molecule type" value="Genomic_DNA"/>
</dbReference>
<dbReference type="RefSeq" id="WP_015890594.1">
    <property type="nucleotide sequence ID" value="NC_012522.1"/>
</dbReference>
<dbReference type="SMR" id="C1B4H5"/>
<dbReference type="STRING" id="632772.ROP_69170"/>
<dbReference type="KEGG" id="rop:ROP_69170"/>
<dbReference type="PATRIC" id="fig|632772.20.peg.7208"/>
<dbReference type="HOGENOM" id="CLU_098240_0_1_11"/>
<dbReference type="OrthoDB" id="9790539at2"/>
<dbReference type="Proteomes" id="UP000002212">
    <property type="component" value="Chromosome"/>
</dbReference>
<dbReference type="GO" id="GO:0005829">
    <property type="term" value="C:cytosol"/>
    <property type="evidence" value="ECO:0007669"/>
    <property type="project" value="TreeGrafter"/>
</dbReference>
<dbReference type="GO" id="GO:0004518">
    <property type="term" value="F:nuclease activity"/>
    <property type="evidence" value="ECO:0007669"/>
    <property type="project" value="UniProtKB-KW"/>
</dbReference>
<dbReference type="GO" id="GO:0000967">
    <property type="term" value="P:rRNA 5'-end processing"/>
    <property type="evidence" value="ECO:0007669"/>
    <property type="project" value="UniProtKB-UniRule"/>
</dbReference>
<dbReference type="CDD" id="cd16964">
    <property type="entry name" value="YqgF"/>
    <property type="match status" value="1"/>
</dbReference>
<dbReference type="FunFam" id="3.30.420.140:FF:000005">
    <property type="entry name" value="Putative pre-16S rRNA nuclease"/>
    <property type="match status" value="1"/>
</dbReference>
<dbReference type="Gene3D" id="3.30.420.140">
    <property type="entry name" value="YqgF/RNase H-like domain"/>
    <property type="match status" value="1"/>
</dbReference>
<dbReference type="HAMAP" id="MF_00651">
    <property type="entry name" value="Nuclease_YqgF"/>
    <property type="match status" value="1"/>
</dbReference>
<dbReference type="InterPro" id="IPR012337">
    <property type="entry name" value="RNaseH-like_sf"/>
</dbReference>
<dbReference type="InterPro" id="IPR005227">
    <property type="entry name" value="YqgF"/>
</dbReference>
<dbReference type="InterPro" id="IPR006641">
    <property type="entry name" value="YqgF/RNaseH-like_dom"/>
</dbReference>
<dbReference type="InterPro" id="IPR037027">
    <property type="entry name" value="YqgF/RNaseH-like_dom_sf"/>
</dbReference>
<dbReference type="NCBIfam" id="TIGR00250">
    <property type="entry name" value="RNAse_H_YqgF"/>
    <property type="match status" value="1"/>
</dbReference>
<dbReference type="PANTHER" id="PTHR33317">
    <property type="entry name" value="POLYNUCLEOTIDYL TRANSFERASE, RIBONUCLEASE H-LIKE SUPERFAMILY PROTEIN"/>
    <property type="match status" value="1"/>
</dbReference>
<dbReference type="PANTHER" id="PTHR33317:SF4">
    <property type="entry name" value="POLYNUCLEOTIDYL TRANSFERASE, RIBONUCLEASE H-LIKE SUPERFAMILY PROTEIN"/>
    <property type="match status" value="1"/>
</dbReference>
<dbReference type="Pfam" id="PF03652">
    <property type="entry name" value="RuvX"/>
    <property type="match status" value="1"/>
</dbReference>
<dbReference type="SMART" id="SM00732">
    <property type="entry name" value="YqgFc"/>
    <property type="match status" value="1"/>
</dbReference>
<dbReference type="SUPFAM" id="SSF53098">
    <property type="entry name" value="Ribonuclease H-like"/>
    <property type="match status" value="1"/>
</dbReference>
<accession>C1B4H5</accession>
<comment type="function">
    <text evidence="1">Could be a nuclease involved in processing of the 5'-end of pre-16S rRNA.</text>
</comment>
<comment type="subcellular location">
    <subcellularLocation>
        <location evidence="1">Cytoplasm</location>
    </subcellularLocation>
</comment>
<comment type="similarity">
    <text evidence="1">Belongs to the YqgF nuclease family.</text>
</comment>
<evidence type="ECO:0000255" key="1">
    <source>
        <dbReference type="HAMAP-Rule" id="MF_00651"/>
    </source>
</evidence>
<evidence type="ECO:0000256" key="2">
    <source>
        <dbReference type="SAM" id="MobiDB-lite"/>
    </source>
</evidence>
<protein>
    <recommendedName>
        <fullName evidence="1">Putative pre-16S rRNA nuclease</fullName>
        <ecNumber evidence="1">3.1.-.-</ecNumber>
    </recommendedName>
</protein>
<organism>
    <name type="scientific">Rhodococcus opacus (strain B4)</name>
    <dbReference type="NCBI Taxonomy" id="632772"/>
    <lineage>
        <taxon>Bacteria</taxon>
        <taxon>Bacillati</taxon>
        <taxon>Actinomycetota</taxon>
        <taxon>Actinomycetes</taxon>
        <taxon>Mycobacteriales</taxon>
        <taxon>Nocardiaceae</taxon>
        <taxon>Rhodococcus</taxon>
    </lineage>
</organism>
<name>YQGF_RHOOB</name>
<keyword id="KW-0963">Cytoplasm</keyword>
<keyword id="KW-0378">Hydrolase</keyword>
<keyword id="KW-0540">Nuclease</keyword>
<keyword id="KW-0690">Ribosome biogenesis</keyword>